<keyword id="KW-0012">Acyltransferase</keyword>
<keyword id="KW-0963">Cytoplasm</keyword>
<keyword id="KW-1185">Reference proteome</keyword>
<keyword id="KW-0808">Transferase</keyword>
<name>LFTR_LARHH</name>
<comment type="function">
    <text evidence="1">Functions in the N-end rule pathway of protein degradation where it conjugates Leu, Phe and, less efficiently, Met from aminoacyl-tRNAs to the N-termini of proteins containing an N-terminal arginine or lysine.</text>
</comment>
<comment type="catalytic activity">
    <reaction evidence="1">
        <text>N-terminal L-lysyl-[protein] + L-leucyl-tRNA(Leu) = N-terminal L-leucyl-L-lysyl-[protein] + tRNA(Leu) + H(+)</text>
        <dbReference type="Rhea" id="RHEA:12340"/>
        <dbReference type="Rhea" id="RHEA-COMP:9613"/>
        <dbReference type="Rhea" id="RHEA-COMP:9622"/>
        <dbReference type="Rhea" id="RHEA-COMP:12670"/>
        <dbReference type="Rhea" id="RHEA-COMP:12671"/>
        <dbReference type="ChEBI" id="CHEBI:15378"/>
        <dbReference type="ChEBI" id="CHEBI:65249"/>
        <dbReference type="ChEBI" id="CHEBI:78442"/>
        <dbReference type="ChEBI" id="CHEBI:78494"/>
        <dbReference type="ChEBI" id="CHEBI:133043"/>
        <dbReference type="EC" id="2.3.2.6"/>
    </reaction>
</comment>
<comment type="catalytic activity">
    <reaction evidence="1">
        <text>N-terminal L-arginyl-[protein] + L-leucyl-tRNA(Leu) = N-terminal L-leucyl-L-arginyl-[protein] + tRNA(Leu) + H(+)</text>
        <dbReference type="Rhea" id="RHEA:50416"/>
        <dbReference type="Rhea" id="RHEA-COMP:9613"/>
        <dbReference type="Rhea" id="RHEA-COMP:9622"/>
        <dbReference type="Rhea" id="RHEA-COMP:12672"/>
        <dbReference type="Rhea" id="RHEA-COMP:12673"/>
        <dbReference type="ChEBI" id="CHEBI:15378"/>
        <dbReference type="ChEBI" id="CHEBI:64719"/>
        <dbReference type="ChEBI" id="CHEBI:78442"/>
        <dbReference type="ChEBI" id="CHEBI:78494"/>
        <dbReference type="ChEBI" id="CHEBI:133044"/>
        <dbReference type="EC" id="2.3.2.6"/>
    </reaction>
</comment>
<comment type="catalytic activity">
    <reaction evidence="1">
        <text>L-phenylalanyl-tRNA(Phe) + an N-terminal L-alpha-aminoacyl-[protein] = an N-terminal L-phenylalanyl-L-alpha-aminoacyl-[protein] + tRNA(Phe)</text>
        <dbReference type="Rhea" id="RHEA:43632"/>
        <dbReference type="Rhea" id="RHEA-COMP:9668"/>
        <dbReference type="Rhea" id="RHEA-COMP:9699"/>
        <dbReference type="Rhea" id="RHEA-COMP:10636"/>
        <dbReference type="Rhea" id="RHEA-COMP:10637"/>
        <dbReference type="ChEBI" id="CHEBI:78442"/>
        <dbReference type="ChEBI" id="CHEBI:78531"/>
        <dbReference type="ChEBI" id="CHEBI:78597"/>
        <dbReference type="ChEBI" id="CHEBI:83561"/>
        <dbReference type="EC" id="2.3.2.6"/>
    </reaction>
</comment>
<comment type="subcellular location">
    <subcellularLocation>
        <location evidence="1">Cytoplasm</location>
    </subcellularLocation>
</comment>
<comment type="similarity">
    <text evidence="1">Belongs to the L/F-transferase family.</text>
</comment>
<organism>
    <name type="scientific">Laribacter hongkongensis (strain HLHK9)</name>
    <dbReference type="NCBI Taxonomy" id="557598"/>
    <lineage>
        <taxon>Bacteria</taxon>
        <taxon>Pseudomonadati</taxon>
        <taxon>Pseudomonadota</taxon>
        <taxon>Betaproteobacteria</taxon>
        <taxon>Neisseriales</taxon>
        <taxon>Aquaspirillaceae</taxon>
        <taxon>Laribacter</taxon>
    </lineage>
</organism>
<sequence length="233" mass="26115">MIAWLDEDEPFPPVEQALTEPSGLLAASADLPVSRLVTAYRRGIFPWFNPGEPVLWWSPDPRMVLYPAELHVPRSLEKVLRHRRYTVTVDRAFGSVIRACAAPTPARPASWITPEIISTYSQLYRLGLAHSVETWIDGQLAGGFYGVMIGRMFYGESMFAQAPDASKIAFAHLMRRFAGHGIDMIDCQMHTAHLARFGGREIPRSDFVATVNTLTAQPAPPDLWRWSHCNEPA</sequence>
<feature type="chain" id="PRO_1000147792" description="Leucyl/phenylalanyl-tRNA--protein transferase">
    <location>
        <begin position="1"/>
        <end position="233"/>
    </location>
</feature>
<proteinExistence type="inferred from homology"/>
<gene>
    <name evidence="1" type="primary">aat</name>
    <name type="ordered locus">LHK_01432</name>
</gene>
<dbReference type="EC" id="2.3.2.6" evidence="1"/>
<dbReference type="EMBL" id="CP001154">
    <property type="protein sequence ID" value="ACO74422.1"/>
    <property type="molecule type" value="Genomic_DNA"/>
</dbReference>
<dbReference type="RefSeq" id="WP_012696908.1">
    <property type="nucleotide sequence ID" value="NC_012559.1"/>
</dbReference>
<dbReference type="SMR" id="C1D7I2"/>
<dbReference type="STRING" id="557598.LHK_01432"/>
<dbReference type="GeneID" id="75109802"/>
<dbReference type="KEGG" id="lhk:LHK_01432"/>
<dbReference type="eggNOG" id="COG2360">
    <property type="taxonomic scope" value="Bacteria"/>
</dbReference>
<dbReference type="HOGENOM" id="CLU_075045_0_0_4"/>
<dbReference type="Proteomes" id="UP000002010">
    <property type="component" value="Chromosome"/>
</dbReference>
<dbReference type="GO" id="GO:0005737">
    <property type="term" value="C:cytoplasm"/>
    <property type="evidence" value="ECO:0007669"/>
    <property type="project" value="UniProtKB-SubCell"/>
</dbReference>
<dbReference type="GO" id="GO:0008914">
    <property type="term" value="F:leucyl-tRNA--protein transferase activity"/>
    <property type="evidence" value="ECO:0007669"/>
    <property type="project" value="UniProtKB-UniRule"/>
</dbReference>
<dbReference type="GO" id="GO:0030163">
    <property type="term" value="P:protein catabolic process"/>
    <property type="evidence" value="ECO:0007669"/>
    <property type="project" value="UniProtKB-UniRule"/>
</dbReference>
<dbReference type="FunFam" id="3.30.70.3550:FF:000001">
    <property type="entry name" value="Leucyl/phenylalanyl-tRNA--protein transferase"/>
    <property type="match status" value="1"/>
</dbReference>
<dbReference type="Gene3D" id="3.40.630.70">
    <property type="entry name" value="Leucyl/phenylalanyl-tRNA-protein transferase, C-terminal domain"/>
    <property type="match status" value="1"/>
</dbReference>
<dbReference type="Gene3D" id="3.30.70.3550">
    <property type="entry name" value="Leucyl/phenylalanyl-tRNA-protein transferase, N-terminal domain"/>
    <property type="match status" value="1"/>
</dbReference>
<dbReference type="HAMAP" id="MF_00688">
    <property type="entry name" value="Leu_Phe_trans"/>
    <property type="match status" value="1"/>
</dbReference>
<dbReference type="InterPro" id="IPR016181">
    <property type="entry name" value="Acyl_CoA_acyltransferase"/>
</dbReference>
<dbReference type="InterPro" id="IPR004616">
    <property type="entry name" value="Leu/Phe-tRNA_Trfase"/>
</dbReference>
<dbReference type="InterPro" id="IPR042203">
    <property type="entry name" value="Leu/Phe-tRNA_Trfase_C"/>
</dbReference>
<dbReference type="InterPro" id="IPR042221">
    <property type="entry name" value="Leu/Phe-tRNA_Trfase_N"/>
</dbReference>
<dbReference type="NCBIfam" id="TIGR00667">
    <property type="entry name" value="aat"/>
    <property type="match status" value="1"/>
</dbReference>
<dbReference type="PANTHER" id="PTHR30098">
    <property type="entry name" value="LEUCYL/PHENYLALANYL-TRNA--PROTEIN TRANSFERASE"/>
    <property type="match status" value="1"/>
</dbReference>
<dbReference type="PANTHER" id="PTHR30098:SF2">
    <property type="entry name" value="LEUCYL_PHENYLALANYL-TRNA--PROTEIN TRANSFERASE"/>
    <property type="match status" value="1"/>
</dbReference>
<dbReference type="Pfam" id="PF03588">
    <property type="entry name" value="Leu_Phe_trans"/>
    <property type="match status" value="1"/>
</dbReference>
<dbReference type="SUPFAM" id="SSF55729">
    <property type="entry name" value="Acyl-CoA N-acyltransferases (Nat)"/>
    <property type="match status" value="1"/>
</dbReference>
<evidence type="ECO:0000255" key="1">
    <source>
        <dbReference type="HAMAP-Rule" id="MF_00688"/>
    </source>
</evidence>
<accession>C1D7I2</accession>
<protein>
    <recommendedName>
        <fullName evidence="1">Leucyl/phenylalanyl-tRNA--protein transferase</fullName>
        <ecNumber evidence="1">2.3.2.6</ecNumber>
    </recommendedName>
    <alternativeName>
        <fullName evidence="1">L/F-transferase</fullName>
    </alternativeName>
    <alternativeName>
        <fullName evidence="1">Leucyltransferase</fullName>
    </alternativeName>
    <alternativeName>
        <fullName evidence="1">Phenyalanyltransferase</fullName>
    </alternativeName>
</protein>
<reference key="1">
    <citation type="journal article" date="2009" name="PLoS Genet.">
        <title>The complete genome and proteome of Laribacter hongkongensis reveal potential mechanisms for adaptations to different temperatures and habitats.</title>
        <authorList>
            <person name="Woo P.C.Y."/>
            <person name="Lau S.K.P."/>
            <person name="Tse H."/>
            <person name="Teng J.L.L."/>
            <person name="Curreem S.O."/>
            <person name="Tsang A.K.L."/>
            <person name="Fan R.Y.Y."/>
            <person name="Wong G.K.M."/>
            <person name="Huang Y."/>
            <person name="Loman N.J."/>
            <person name="Snyder L.A.S."/>
            <person name="Cai J.J."/>
            <person name="Huang J.-D."/>
            <person name="Mak W."/>
            <person name="Pallen M.J."/>
            <person name="Lok S."/>
            <person name="Yuen K.-Y."/>
        </authorList>
    </citation>
    <scope>NUCLEOTIDE SEQUENCE [LARGE SCALE GENOMIC DNA]</scope>
    <source>
        <strain>HLHK9</strain>
    </source>
</reference>